<protein>
    <recommendedName>
        <fullName>Melanoregulin</fullName>
    </recommendedName>
</protein>
<gene>
    <name type="primary">mreg</name>
    <name type="ORF">si:ch211-51m24.2</name>
    <name type="ORF">zgc:91968</name>
</gene>
<organism>
    <name type="scientific">Danio rerio</name>
    <name type="common">Zebrafish</name>
    <name type="synonym">Brachydanio rerio</name>
    <dbReference type="NCBI Taxonomy" id="7955"/>
    <lineage>
        <taxon>Eukaryota</taxon>
        <taxon>Metazoa</taxon>
        <taxon>Chordata</taxon>
        <taxon>Craniata</taxon>
        <taxon>Vertebrata</taxon>
        <taxon>Euteleostomi</taxon>
        <taxon>Actinopterygii</taxon>
        <taxon>Neopterygii</taxon>
        <taxon>Teleostei</taxon>
        <taxon>Ostariophysi</taxon>
        <taxon>Cypriniformes</taxon>
        <taxon>Danionidae</taxon>
        <taxon>Danioninae</taxon>
        <taxon>Danio</taxon>
    </lineage>
</organism>
<sequence length="234" mass="27149">MGTAFKKFCIKFCCCCCCEDEDEEEKAPLIGHDTLDYFDREAKKRRDQETNLWSEPGDPSHSERDDDRVLYKLLQCRQQTQPGSRGYRRLSIDIEAMRDVRREVRDKWKMILENLGFMAEAESLLNVSASASYDRMRNAASARSLLQTLHTETSLFNSKEPPPERYLFILDRLIYLDAAEDFVAKARRFYPPKDDDEEEESNPLGINLPLLLSRMNQNISGGEDEDEDESEPDD</sequence>
<accession>Q6GQM0</accession>
<proteinExistence type="evidence at transcript level"/>
<evidence type="ECO:0000250" key="1">
    <source>
        <dbReference type="UniProtKB" id="Q6NVG5"/>
    </source>
</evidence>
<evidence type="ECO:0000256" key="2">
    <source>
        <dbReference type="SAM" id="MobiDB-lite"/>
    </source>
</evidence>
<evidence type="ECO:0000305" key="3"/>
<feature type="chain" id="PRO_0000292177" description="Melanoregulin">
    <location>
        <begin position="1"/>
        <end position="234"/>
    </location>
</feature>
<feature type="region of interest" description="Disordered" evidence="2">
    <location>
        <begin position="215"/>
        <end position="234"/>
    </location>
</feature>
<feature type="compositionally biased region" description="Acidic residues" evidence="2">
    <location>
        <begin position="222"/>
        <end position="234"/>
    </location>
</feature>
<comment type="function">
    <text evidence="1">Probably functions as a cargo-recognition protein that couples cytoplasmic vesicles to the transport machinery. Contributes to retrograde melanosome transport from the cell periphery to the center. Overexpression causes accumulation of late endosomes and/or lysosomes at the microtubule organising center (MTOC) at the center of the cell. Probably binds cholesterol and requires the presence of cholesterol in membranes to function in microtubule-mediated retrograde organelle transport. Binds phosphatidylinositol 3-phosphate, phosphatidylinositol 4-phosphate, phosphatidylinositol 5-phosphate and phosphatidylinositol 3,5-bisphosphate.</text>
</comment>
<comment type="subcellular location">
    <subcellularLocation>
        <location evidence="1">Apical cell membrane</location>
        <topology evidence="1">Peripheral membrane protein</topology>
    </subcellularLocation>
    <subcellularLocation>
        <location evidence="1">Melanosome membrane</location>
        <topology evidence="1">Lipid-anchor</topology>
    </subcellularLocation>
    <subcellularLocation>
        <location evidence="1">Lysosome membrane</location>
        <topology evidence="1">Lipid-anchor</topology>
    </subcellularLocation>
    <subcellularLocation>
        <location evidence="1">Cytoplasmic vesicle membrane</location>
    </subcellularLocation>
</comment>
<comment type="similarity">
    <text evidence="3">Belongs to the melanoregulin family.</text>
</comment>
<reference key="1">
    <citation type="journal article" date="2013" name="Nature">
        <title>The zebrafish reference genome sequence and its relationship to the human genome.</title>
        <authorList>
            <person name="Howe K."/>
            <person name="Clark M.D."/>
            <person name="Torroja C.F."/>
            <person name="Torrance J."/>
            <person name="Berthelot C."/>
            <person name="Muffato M."/>
            <person name="Collins J.E."/>
            <person name="Humphray S."/>
            <person name="McLaren K."/>
            <person name="Matthews L."/>
            <person name="McLaren S."/>
            <person name="Sealy I."/>
            <person name="Caccamo M."/>
            <person name="Churcher C."/>
            <person name="Scott C."/>
            <person name="Barrett J.C."/>
            <person name="Koch R."/>
            <person name="Rauch G.J."/>
            <person name="White S."/>
            <person name="Chow W."/>
            <person name="Kilian B."/>
            <person name="Quintais L.T."/>
            <person name="Guerra-Assuncao J.A."/>
            <person name="Zhou Y."/>
            <person name="Gu Y."/>
            <person name="Yen J."/>
            <person name="Vogel J.H."/>
            <person name="Eyre T."/>
            <person name="Redmond S."/>
            <person name="Banerjee R."/>
            <person name="Chi J."/>
            <person name="Fu B."/>
            <person name="Langley E."/>
            <person name="Maguire S.F."/>
            <person name="Laird G.K."/>
            <person name="Lloyd D."/>
            <person name="Kenyon E."/>
            <person name="Donaldson S."/>
            <person name="Sehra H."/>
            <person name="Almeida-King J."/>
            <person name="Loveland J."/>
            <person name="Trevanion S."/>
            <person name="Jones M."/>
            <person name="Quail M."/>
            <person name="Willey D."/>
            <person name="Hunt A."/>
            <person name="Burton J."/>
            <person name="Sims S."/>
            <person name="McLay K."/>
            <person name="Plumb B."/>
            <person name="Davis J."/>
            <person name="Clee C."/>
            <person name="Oliver K."/>
            <person name="Clark R."/>
            <person name="Riddle C."/>
            <person name="Elliot D."/>
            <person name="Threadgold G."/>
            <person name="Harden G."/>
            <person name="Ware D."/>
            <person name="Begum S."/>
            <person name="Mortimore B."/>
            <person name="Kerry G."/>
            <person name="Heath P."/>
            <person name="Phillimore B."/>
            <person name="Tracey A."/>
            <person name="Corby N."/>
            <person name="Dunn M."/>
            <person name="Johnson C."/>
            <person name="Wood J."/>
            <person name="Clark S."/>
            <person name="Pelan S."/>
            <person name="Griffiths G."/>
            <person name="Smith M."/>
            <person name="Glithero R."/>
            <person name="Howden P."/>
            <person name="Barker N."/>
            <person name="Lloyd C."/>
            <person name="Stevens C."/>
            <person name="Harley J."/>
            <person name="Holt K."/>
            <person name="Panagiotidis G."/>
            <person name="Lovell J."/>
            <person name="Beasley H."/>
            <person name="Henderson C."/>
            <person name="Gordon D."/>
            <person name="Auger K."/>
            <person name="Wright D."/>
            <person name="Collins J."/>
            <person name="Raisen C."/>
            <person name="Dyer L."/>
            <person name="Leung K."/>
            <person name="Robertson L."/>
            <person name="Ambridge K."/>
            <person name="Leongamornlert D."/>
            <person name="McGuire S."/>
            <person name="Gilderthorp R."/>
            <person name="Griffiths C."/>
            <person name="Manthravadi D."/>
            <person name="Nichol S."/>
            <person name="Barker G."/>
            <person name="Whitehead S."/>
            <person name="Kay M."/>
            <person name="Brown J."/>
            <person name="Murnane C."/>
            <person name="Gray E."/>
            <person name="Humphries M."/>
            <person name="Sycamore N."/>
            <person name="Barker D."/>
            <person name="Saunders D."/>
            <person name="Wallis J."/>
            <person name="Babbage A."/>
            <person name="Hammond S."/>
            <person name="Mashreghi-Mohammadi M."/>
            <person name="Barr L."/>
            <person name="Martin S."/>
            <person name="Wray P."/>
            <person name="Ellington A."/>
            <person name="Matthews N."/>
            <person name="Ellwood M."/>
            <person name="Woodmansey R."/>
            <person name="Clark G."/>
            <person name="Cooper J."/>
            <person name="Tromans A."/>
            <person name="Grafham D."/>
            <person name="Skuce C."/>
            <person name="Pandian R."/>
            <person name="Andrews R."/>
            <person name="Harrison E."/>
            <person name="Kimberley A."/>
            <person name="Garnett J."/>
            <person name="Fosker N."/>
            <person name="Hall R."/>
            <person name="Garner P."/>
            <person name="Kelly D."/>
            <person name="Bird C."/>
            <person name="Palmer S."/>
            <person name="Gehring I."/>
            <person name="Berger A."/>
            <person name="Dooley C.M."/>
            <person name="Ersan-Urun Z."/>
            <person name="Eser C."/>
            <person name="Geiger H."/>
            <person name="Geisler M."/>
            <person name="Karotki L."/>
            <person name="Kirn A."/>
            <person name="Konantz J."/>
            <person name="Konantz M."/>
            <person name="Oberlander M."/>
            <person name="Rudolph-Geiger S."/>
            <person name="Teucke M."/>
            <person name="Lanz C."/>
            <person name="Raddatz G."/>
            <person name="Osoegawa K."/>
            <person name="Zhu B."/>
            <person name="Rapp A."/>
            <person name="Widaa S."/>
            <person name="Langford C."/>
            <person name="Yang F."/>
            <person name="Schuster S.C."/>
            <person name="Carter N.P."/>
            <person name="Harrow J."/>
            <person name="Ning Z."/>
            <person name="Herrero J."/>
            <person name="Searle S.M."/>
            <person name="Enright A."/>
            <person name="Geisler R."/>
            <person name="Plasterk R.H."/>
            <person name="Lee C."/>
            <person name="Westerfield M."/>
            <person name="de Jong P.J."/>
            <person name="Zon L.I."/>
            <person name="Postlethwait J.H."/>
            <person name="Nusslein-Volhard C."/>
            <person name="Hubbard T.J."/>
            <person name="Roest Crollius H."/>
            <person name="Rogers J."/>
            <person name="Stemple D.L."/>
        </authorList>
    </citation>
    <scope>NUCLEOTIDE SEQUENCE [LARGE SCALE GENOMIC DNA]</scope>
    <source>
        <strain>Tuebingen</strain>
    </source>
</reference>
<reference key="2">
    <citation type="submission" date="2004-06" db="EMBL/GenBank/DDBJ databases">
        <authorList>
            <consortium name="NIH - Zebrafish Gene Collection (ZGC) project"/>
        </authorList>
    </citation>
    <scope>NUCLEOTIDE SEQUENCE [LARGE SCALE MRNA]</scope>
</reference>
<name>MREG_DANRE</name>
<dbReference type="EMBL" id="BX004850">
    <property type="protein sequence ID" value="CAK04972.1"/>
    <property type="molecule type" value="Genomic_DNA"/>
</dbReference>
<dbReference type="EMBL" id="BC072722">
    <property type="protein sequence ID" value="AAH72722.1"/>
    <property type="molecule type" value="mRNA"/>
</dbReference>
<dbReference type="RefSeq" id="NP_001002167.1">
    <property type="nucleotide sequence ID" value="NM_001002167.1"/>
</dbReference>
<dbReference type="RefSeq" id="XP_005159406.1">
    <property type="nucleotide sequence ID" value="XM_005159349.2"/>
</dbReference>
<dbReference type="SMR" id="Q6GQM0"/>
<dbReference type="FunCoup" id="Q6GQM0">
    <property type="interactions" value="1124"/>
</dbReference>
<dbReference type="STRING" id="7955.ENSDARP00000116628"/>
<dbReference type="PaxDb" id="7955-ENSDARP00000116628"/>
<dbReference type="Ensembl" id="ENSDART00000017535">
    <property type="protein sequence ID" value="ENSDARP00000009192"/>
    <property type="gene ID" value="ENSDARG00000011076"/>
</dbReference>
<dbReference type="Ensembl" id="ENSDART00000147056">
    <property type="protein sequence ID" value="ENSDARP00000116628"/>
    <property type="gene ID" value="ENSDARG00000011076"/>
</dbReference>
<dbReference type="GeneID" id="431714"/>
<dbReference type="KEGG" id="dre:431714"/>
<dbReference type="AGR" id="ZFIN:ZDB-GENE-040704-1"/>
<dbReference type="ZFIN" id="ZDB-GENE-040704-1">
    <property type="gene designation" value="zgc:91968"/>
</dbReference>
<dbReference type="eggNOG" id="ENOG502S05X">
    <property type="taxonomic scope" value="Eukaryota"/>
</dbReference>
<dbReference type="HOGENOM" id="CLU_105265_0_0_1"/>
<dbReference type="InParanoid" id="Q6GQM0"/>
<dbReference type="OMA" id="FKRFCMQ"/>
<dbReference type="OrthoDB" id="10015106at2759"/>
<dbReference type="PhylomeDB" id="Q6GQM0"/>
<dbReference type="TreeFam" id="TF334733"/>
<dbReference type="PRO" id="PR:Q6GQM0"/>
<dbReference type="Proteomes" id="UP000000437">
    <property type="component" value="Chromosome 19"/>
</dbReference>
<dbReference type="Bgee" id="ENSDARG00000011076">
    <property type="expression patterns" value="Expressed in pigment cell and 15 other cell types or tissues"/>
</dbReference>
<dbReference type="ExpressionAtlas" id="Q6GQM0">
    <property type="expression patterns" value="baseline and differential"/>
</dbReference>
<dbReference type="GO" id="GO:0016324">
    <property type="term" value="C:apical plasma membrane"/>
    <property type="evidence" value="ECO:0007669"/>
    <property type="project" value="UniProtKB-SubCell"/>
</dbReference>
<dbReference type="GO" id="GO:0030659">
    <property type="term" value="C:cytoplasmic vesicle membrane"/>
    <property type="evidence" value="ECO:0000250"/>
    <property type="project" value="UniProtKB"/>
</dbReference>
<dbReference type="GO" id="GO:0031902">
    <property type="term" value="C:late endosome membrane"/>
    <property type="evidence" value="ECO:0000250"/>
    <property type="project" value="UniProtKB"/>
</dbReference>
<dbReference type="GO" id="GO:0005765">
    <property type="term" value="C:lysosomal membrane"/>
    <property type="evidence" value="ECO:0007669"/>
    <property type="project" value="UniProtKB-SubCell"/>
</dbReference>
<dbReference type="GO" id="GO:0033162">
    <property type="term" value="C:melanosome membrane"/>
    <property type="evidence" value="ECO:0000250"/>
    <property type="project" value="UniProtKB"/>
</dbReference>
<dbReference type="GO" id="GO:0031090">
    <property type="term" value="C:organelle membrane"/>
    <property type="evidence" value="ECO:0000250"/>
    <property type="project" value="UniProtKB"/>
</dbReference>
<dbReference type="GO" id="GO:0035091">
    <property type="term" value="F:phosphatidylinositol binding"/>
    <property type="evidence" value="ECO:0000250"/>
    <property type="project" value="UniProtKB"/>
</dbReference>
<dbReference type="GO" id="GO:0032400">
    <property type="term" value="P:melanosome localization"/>
    <property type="evidence" value="ECO:0000250"/>
    <property type="project" value="UniProtKB"/>
</dbReference>
<dbReference type="GO" id="GO:0032402">
    <property type="term" value="P:melanosome transport"/>
    <property type="evidence" value="ECO:0007669"/>
    <property type="project" value="InterPro"/>
</dbReference>
<dbReference type="GO" id="GO:0090382">
    <property type="term" value="P:phagosome maturation"/>
    <property type="evidence" value="ECO:0000250"/>
    <property type="project" value="UniProtKB"/>
</dbReference>
<dbReference type="InterPro" id="IPR031638">
    <property type="entry name" value="Melanoregulin"/>
</dbReference>
<dbReference type="PANTHER" id="PTHR34340">
    <property type="entry name" value="MELANOREGULIN"/>
    <property type="match status" value="1"/>
</dbReference>
<dbReference type="PANTHER" id="PTHR34340:SF1">
    <property type="entry name" value="MELANOREGULIN"/>
    <property type="match status" value="1"/>
</dbReference>
<dbReference type="Pfam" id="PF15812">
    <property type="entry name" value="MREG"/>
    <property type="match status" value="1"/>
</dbReference>
<keyword id="KW-1003">Cell membrane</keyword>
<keyword id="KW-0968">Cytoplasmic vesicle</keyword>
<keyword id="KW-0446">Lipid-binding</keyword>
<keyword id="KW-0449">Lipoprotein</keyword>
<keyword id="KW-0458">Lysosome</keyword>
<keyword id="KW-0472">Membrane</keyword>
<keyword id="KW-1185">Reference proteome</keyword>
<keyword id="KW-0813">Transport</keyword>